<organism>
    <name type="scientific">Streptococcus pneumoniae (strain P1031)</name>
    <dbReference type="NCBI Taxonomy" id="488223"/>
    <lineage>
        <taxon>Bacteria</taxon>
        <taxon>Bacillati</taxon>
        <taxon>Bacillota</taxon>
        <taxon>Bacilli</taxon>
        <taxon>Lactobacillales</taxon>
        <taxon>Streptococcaceae</taxon>
        <taxon>Streptococcus</taxon>
    </lineage>
</organism>
<feature type="chain" id="PRO_1000134329" description="Small ribosomal subunit protein bS16">
    <location>
        <begin position="1"/>
        <end position="90"/>
    </location>
</feature>
<dbReference type="EMBL" id="CP000920">
    <property type="protein sequence ID" value="ACO21740.1"/>
    <property type="molecule type" value="Genomic_DNA"/>
</dbReference>
<dbReference type="RefSeq" id="WP_000268761.1">
    <property type="nucleotide sequence ID" value="NC_012467.1"/>
</dbReference>
<dbReference type="SMR" id="C1CJM1"/>
<dbReference type="GeneID" id="45653854"/>
<dbReference type="KEGG" id="spp:SPP_0783"/>
<dbReference type="HOGENOM" id="CLU_100590_5_0_9"/>
<dbReference type="GO" id="GO:0005737">
    <property type="term" value="C:cytoplasm"/>
    <property type="evidence" value="ECO:0007669"/>
    <property type="project" value="UniProtKB-ARBA"/>
</dbReference>
<dbReference type="GO" id="GO:0015935">
    <property type="term" value="C:small ribosomal subunit"/>
    <property type="evidence" value="ECO:0007669"/>
    <property type="project" value="TreeGrafter"/>
</dbReference>
<dbReference type="GO" id="GO:0003735">
    <property type="term" value="F:structural constituent of ribosome"/>
    <property type="evidence" value="ECO:0007669"/>
    <property type="project" value="InterPro"/>
</dbReference>
<dbReference type="GO" id="GO:0006412">
    <property type="term" value="P:translation"/>
    <property type="evidence" value="ECO:0007669"/>
    <property type="project" value="UniProtKB-UniRule"/>
</dbReference>
<dbReference type="FunFam" id="3.30.1320.10:FF:000002">
    <property type="entry name" value="30S ribosomal protein S16"/>
    <property type="match status" value="1"/>
</dbReference>
<dbReference type="Gene3D" id="3.30.1320.10">
    <property type="match status" value="1"/>
</dbReference>
<dbReference type="HAMAP" id="MF_00385">
    <property type="entry name" value="Ribosomal_bS16"/>
    <property type="match status" value="1"/>
</dbReference>
<dbReference type="InterPro" id="IPR000307">
    <property type="entry name" value="Ribosomal_bS16"/>
</dbReference>
<dbReference type="InterPro" id="IPR023803">
    <property type="entry name" value="Ribosomal_bS16_dom_sf"/>
</dbReference>
<dbReference type="NCBIfam" id="TIGR00002">
    <property type="entry name" value="S16"/>
    <property type="match status" value="1"/>
</dbReference>
<dbReference type="PANTHER" id="PTHR12919">
    <property type="entry name" value="30S RIBOSOMAL PROTEIN S16"/>
    <property type="match status" value="1"/>
</dbReference>
<dbReference type="PANTHER" id="PTHR12919:SF20">
    <property type="entry name" value="SMALL RIBOSOMAL SUBUNIT PROTEIN BS16M"/>
    <property type="match status" value="1"/>
</dbReference>
<dbReference type="Pfam" id="PF00886">
    <property type="entry name" value="Ribosomal_S16"/>
    <property type="match status" value="1"/>
</dbReference>
<dbReference type="SUPFAM" id="SSF54565">
    <property type="entry name" value="Ribosomal protein S16"/>
    <property type="match status" value="1"/>
</dbReference>
<gene>
    <name evidence="1" type="primary">rpsP</name>
    <name type="ordered locus">SPP_0783</name>
</gene>
<reference key="1">
    <citation type="journal article" date="2010" name="Genome Biol.">
        <title>Structure and dynamics of the pan-genome of Streptococcus pneumoniae and closely related species.</title>
        <authorList>
            <person name="Donati C."/>
            <person name="Hiller N.L."/>
            <person name="Tettelin H."/>
            <person name="Muzzi A."/>
            <person name="Croucher N.J."/>
            <person name="Angiuoli S.V."/>
            <person name="Oggioni M."/>
            <person name="Dunning Hotopp J.C."/>
            <person name="Hu F.Z."/>
            <person name="Riley D.R."/>
            <person name="Covacci A."/>
            <person name="Mitchell T.J."/>
            <person name="Bentley S.D."/>
            <person name="Kilian M."/>
            <person name="Ehrlich G.D."/>
            <person name="Rappuoli R."/>
            <person name="Moxon E.R."/>
            <person name="Masignani V."/>
        </authorList>
    </citation>
    <scope>NUCLEOTIDE SEQUENCE [LARGE SCALE GENOMIC DNA]</scope>
    <source>
        <strain>P1031</strain>
    </source>
</reference>
<name>RS16_STRZP</name>
<sequence>MAVKIRLTRMGSKKKPFYRINVADSRSPRDGRFIETVGTYNPLVAENQVTLKEDRVLAWLANGAQPSDTVRNILSKEGVLKKFHDSKFSK</sequence>
<accession>C1CJM1</accession>
<evidence type="ECO:0000255" key="1">
    <source>
        <dbReference type="HAMAP-Rule" id="MF_00385"/>
    </source>
</evidence>
<evidence type="ECO:0000305" key="2"/>
<protein>
    <recommendedName>
        <fullName evidence="1">Small ribosomal subunit protein bS16</fullName>
    </recommendedName>
    <alternativeName>
        <fullName evidence="2">30S ribosomal protein S16</fullName>
    </alternativeName>
</protein>
<proteinExistence type="inferred from homology"/>
<comment type="similarity">
    <text evidence="1">Belongs to the bacterial ribosomal protein bS16 family.</text>
</comment>
<keyword id="KW-0687">Ribonucleoprotein</keyword>
<keyword id="KW-0689">Ribosomal protein</keyword>